<sequence>MQDRLISGTEKPEDHFDRAIRPTSLADYIGQPVVREQMEIFIGAARGRGEALDHTLIFGPPGLGKTTLANIIAREMGGNLKSTSGPVLERAGDLAAMLTNLEEGDVLFIDEIHRLSPVIEEILYPAMEDYQLDIMIGEGPAARSIKLDLPPFTLVAATTRAGLLTSPLRDRFGIVQRLEFYSVEDLTHIVSRSANLMDVPITVEGAEEVARRSRGTPRIANRLLRRVRDYAQVKGTGEVNHEMAQRALDMLNVDKAGLDTLDRRYLSMLLERFDGGPAGVEALAAAMAEDSGTLEDVIEPYLIQQGYVMRTARGRIATNQSYLQFGMTPPEPKN</sequence>
<keyword id="KW-0067">ATP-binding</keyword>
<keyword id="KW-0963">Cytoplasm</keyword>
<keyword id="KW-0227">DNA damage</keyword>
<keyword id="KW-0233">DNA recombination</keyword>
<keyword id="KW-0234">DNA repair</keyword>
<keyword id="KW-0238">DNA-binding</keyword>
<keyword id="KW-0378">Hydrolase</keyword>
<keyword id="KW-0547">Nucleotide-binding</keyword>
<name>RUVB_ACIBS</name>
<dbReference type="EC" id="3.6.4.-" evidence="1"/>
<dbReference type="EMBL" id="CU468230">
    <property type="protein sequence ID" value="CAP00276.1"/>
    <property type="molecule type" value="Genomic_DNA"/>
</dbReference>
<dbReference type="SMR" id="B0VT89"/>
<dbReference type="KEGG" id="abm:ABSDF0915"/>
<dbReference type="HOGENOM" id="CLU_055599_1_0_6"/>
<dbReference type="Proteomes" id="UP000001741">
    <property type="component" value="Chromosome"/>
</dbReference>
<dbReference type="GO" id="GO:0005737">
    <property type="term" value="C:cytoplasm"/>
    <property type="evidence" value="ECO:0007669"/>
    <property type="project" value="UniProtKB-SubCell"/>
</dbReference>
<dbReference type="GO" id="GO:0048476">
    <property type="term" value="C:Holliday junction resolvase complex"/>
    <property type="evidence" value="ECO:0007669"/>
    <property type="project" value="UniProtKB-UniRule"/>
</dbReference>
<dbReference type="GO" id="GO:0005524">
    <property type="term" value="F:ATP binding"/>
    <property type="evidence" value="ECO:0007669"/>
    <property type="project" value="UniProtKB-UniRule"/>
</dbReference>
<dbReference type="GO" id="GO:0016887">
    <property type="term" value="F:ATP hydrolysis activity"/>
    <property type="evidence" value="ECO:0007669"/>
    <property type="project" value="InterPro"/>
</dbReference>
<dbReference type="GO" id="GO:0000400">
    <property type="term" value="F:four-way junction DNA binding"/>
    <property type="evidence" value="ECO:0007669"/>
    <property type="project" value="UniProtKB-UniRule"/>
</dbReference>
<dbReference type="GO" id="GO:0009378">
    <property type="term" value="F:four-way junction helicase activity"/>
    <property type="evidence" value="ECO:0007669"/>
    <property type="project" value="InterPro"/>
</dbReference>
<dbReference type="GO" id="GO:0006310">
    <property type="term" value="P:DNA recombination"/>
    <property type="evidence" value="ECO:0007669"/>
    <property type="project" value="UniProtKB-UniRule"/>
</dbReference>
<dbReference type="GO" id="GO:0006281">
    <property type="term" value="P:DNA repair"/>
    <property type="evidence" value="ECO:0007669"/>
    <property type="project" value="UniProtKB-UniRule"/>
</dbReference>
<dbReference type="CDD" id="cd00009">
    <property type="entry name" value="AAA"/>
    <property type="match status" value="1"/>
</dbReference>
<dbReference type="FunFam" id="1.10.8.60:FF:000023">
    <property type="entry name" value="Holliday junction ATP-dependent DNA helicase RuvB"/>
    <property type="match status" value="1"/>
</dbReference>
<dbReference type="FunFam" id="3.40.50.300:FF:000073">
    <property type="entry name" value="Holliday junction ATP-dependent DNA helicase RuvB"/>
    <property type="match status" value="1"/>
</dbReference>
<dbReference type="Gene3D" id="1.10.8.60">
    <property type="match status" value="1"/>
</dbReference>
<dbReference type="Gene3D" id="3.40.50.300">
    <property type="entry name" value="P-loop containing nucleotide triphosphate hydrolases"/>
    <property type="match status" value="1"/>
</dbReference>
<dbReference type="Gene3D" id="1.10.10.10">
    <property type="entry name" value="Winged helix-like DNA-binding domain superfamily/Winged helix DNA-binding domain"/>
    <property type="match status" value="1"/>
</dbReference>
<dbReference type="HAMAP" id="MF_00016">
    <property type="entry name" value="DNA_HJ_migration_RuvB"/>
    <property type="match status" value="1"/>
</dbReference>
<dbReference type="InterPro" id="IPR003593">
    <property type="entry name" value="AAA+_ATPase"/>
</dbReference>
<dbReference type="InterPro" id="IPR041445">
    <property type="entry name" value="AAA_lid_4"/>
</dbReference>
<dbReference type="InterPro" id="IPR004605">
    <property type="entry name" value="DNA_helicase_Holl-junc_RuvB"/>
</dbReference>
<dbReference type="InterPro" id="IPR027417">
    <property type="entry name" value="P-loop_NTPase"/>
</dbReference>
<dbReference type="InterPro" id="IPR008824">
    <property type="entry name" value="RuvB-like_N"/>
</dbReference>
<dbReference type="InterPro" id="IPR008823">
    <property type="entry name" value="RuvB_C"/>
</dbReference>
<dbReference type="InterPro" id="IPR036388">
    <property type="entry name" value="WH-like_DNA-bd_sf"/>
</dbReference>
<dbReference type="InterPro" id="IPR036390">
    <property type="entry name" value="WH_DNA-bd_sf"/>
</dbReference>
<dbReference type="NCBIfam" id="NF000868">
    <property type="entry name" value="PRK00080.1"/>
    <property type="match status" value="1"/>
</dbReference>
<dbReference type="NCBIfam" id="TIGR00635">
    <property type="entry name" value="ruvB"/>
    <property type="match status" value="1"/>
</dbReference>
<dbReference type="PANTHER" id="PTHR42848">
    <property type="match status" value="1"/>
</dbReference>
<dbReference type="PANTHER" id="PTHR42848:SF1">
    <property type="entry name" value="HOLLIDAY JUNCTION BRANCH MIGRATION COMPLEX SUBUNIT RUVB"/>
    <property type="match status" value="1"/>
</dbReference>
<dbReference type="Pfam" id="PF17864">
    <property type="entry name" value="AAA_lid_4"/>
    <property type="match status" value="1"/>
</dbReference>
<dbReference type="Pfam" id="PF05491">
    <property type="entry name" value="RuvB_C"/>
    <property type="match status" value="1"/>
</dbReference>
<dbReference type="Pfam" id="PF05496">
    <property type="entry name" value="RuvB_N"/>
    <property type="match status" value="1"/>
</dbReference>
<dbReference type="SMART" id="SM00382">
    <property type="entry name" value="AAA"/>
    <property type="match status" value="1"/>
</dbReference>
<dbReference type="SUPFAM" id="SSF52540">
    <property type="entry name" value="P-loop containing nucleoside triphosphate hydrolases"/>
    <property type="match status" value="1"/>
</dbReference>
<dbReference type="SUPFAM" id="SSF46785">
    <property type="entry name" value="Winged helix' DNA-binding domain"/>
    <property type="match status" value="1"/>
</dbReference>
<accession>B0VT89</accession>
<proteinExistence type="inferred from homology"/>
<feature type="chain" id="PRO_1000089610" description="Holliday junction branch migration complex subunit RuvB">
    <location>
        <begin position="1"/>
        <end position="334"/>
    </location>
</feature>
<feature type="region of interest" description="Large ATPase domain (RuvB-L)" evidence="1">
    <location>
        <begin position="1"/>
        <end position="181"/>
    </location>
</feature>
<feature type="region of interest" description="Small ATPAse domain (RuvB-S)" evidence="1">
    <location>
        <begin position="182"/>
        <end position="252"/>
    </location>
</feature>
<feature type="region of interest" description="Head domain (RuvB-H)" evidence="1">
    <location>
        <begin position="255"/>
        <end position="334"/>
    </location>
</feature>
<feature type="binding site" evidence="1">
    <location>
        <position position="20"/>
    </location>
    <ligand>
        <name>ATP</name>
        <dbReference type="ChEBI" id="CHEBI:30616"/>
    </ligand>
</feature>
<feature type="binding site" evidence="1">
    <location>
        <position position="21"/>
    </location>
    <ligand>
        <name>ATP</name>
        <dbReference type="ChEBI" id="CHEBI:30616"/>
    </ligand>
</feature>
<feature type="binding site" evidence="1">
    <location>
        <position position="62"/>
    </location>
    <ligand>
        <name>ATP</name>
        <dbReference type="ChEBI" id="CHEBI:30616"/>
    </ligand>
</feature>
<feature type="binding site" evidence="1">
    <location>
        <position position="65"/>
    </location>
    <ligand>
        <name>ATP</name>
        <dbReference type="ChEBI" id="CHEBI:30616"/>
    </ligand>
</feature>
<feature type="binding site" evidence="1">
    <location>
        <position position="66"/>
    </location>
    <ligand>
        <name>ATP</name>
        <dbReference type="ChEBI" id="CHEBI:30616"/>
    </ligand>
</feature>
<feature type="binding site" evidence="1">
    <location>
        <position position="66"/>
    </location>
    <ligand>
        <name>Mg(2+)</name>
        <dbReference type="ChEBI" id="CHEBI:18420"/>
    </ligand>
</feature>
<feature type="binding site" evidence="1">
    <location>
        <position position="67"/>
    </location>
    <ligand>
        <name>ATP</name>
        <dbReference type="ChEBI" id="CHEBI:30616"/>
    </ligand>
</feature>
<feature type="binding site" evidence="1">
    <location>
        <begin position="128"/>
        <end position="130"/>
    </location>
    <ligand>
        <name>ATP</name>
        <dbReference type="ChEBI" id="CHEBI:30616"/>
    </ligand>
</feature>
<feature type="binding site" evidence="1">
    <location>
        <position position="171"/>
    </location>
    <ligand>
        <name>ATP</name>
        <dbReference type="ChEBI" id="CHEBI:30616"/>
    </ligand>
</feature>
<feature type="binding site" evidence="1">
    <location>
        <position position="181"/>
    </location>
    <ligand>
        <name>ATP</name>
        <dbReference type="ChEBI" id="CHEBI:30616"/>
    </ligand>
</feature>
<feature type="binding site" evidence="1">
    <location>
        <position position="218"/>
    </location>
    <ligand>
        <name>ATP</name>
        <dbReference type="ChEBI" id="CHEBI:30616"/>
    </ligand>
</feature>
<feature type="binding site" evidence="1">
    <location>
        <position position="310"/>
    </location>
    <ligand>
        <name>DNA</name>
        <dbReference type="ChEBI" id="CHEBI:16991"/>
    </ligand>
</feature>
<feature type="binding site" evidence="1">
    <location>
        <position position="315"/>
    </location>
    <ligand>
        <name>DNA</name>
        <dbReference type="ChEBI" id="CHEBI:16991"/>
    </ligand>
</feature>
<gene>
    <name evidence="1" type="primary">ruvB</name>
    <name type="ordered locus">ABSDF0915</name>
</gene>
<evidence type="ECO:0000255" key="1">
    <source>
        <dbReference type="HAMAP-Rule" id="MF_00016"/>
    </source>
</evidence>
<comment type="function">
    <text evidence="1">The RuvA-RuvB-RuvC complex processes Holliday junction (HJ) DNA during genetic recombination and DNA repair, while the RuvA-RuvB complex plays an important role in the rescue of blocked DNA replication forks via replication fork reversal (RFR). RuvA specifically binds to HJ cruciform DNA, conferring on it an open structure. The RuvB hexamer acts as an ATP-dependent pump, pulling dsDNA into and through the RuvAB complex. RuvB forms 2 homohexamers on either side of HJ DNA bound by 1 or 2 RuvA tetramers; 4 subunits per hexamer contact DNA at a time. Coordinated motions by a converter formed by DNA-disengaged RuvB subunits stimulates ATP hydrolysis and nucleotide exchange. Immobilization of the converter enables RuvB to convert the ATP-contained energy into a lever motion, pulling 2 nucleotides of DNA out of the RuvA tetramer per ATP hydrolyzed, thus driving DNA branch migration. The RuvB motors rotate together with the DNA substrate, which together with the progressing nucleotide cycle form the mechanistic basis for DNA recombination by continuous HJ branch migration. Branch migration allows RuvC to scan DNA until it finds its consensus sequence, where it cleaves and resolves cruciform DNA.</text>
</comment>
<comment type="catalytic activity">
    <reaction evidence="1">
        <text>ATP + H2O = ADP + phosphate + H(+)</text>
        <dbReference type="Rhea" id="RHEA:13065"/>
        <dbReference type="ChEBI" id="CHEBI:15377"/>
        <dbReference type="ChEBI" id="CHEBI:15378"/>
        <dbReference type="ChEBI" id="CHEBI:30616"/>
        <dbReference type="ChEBI" id="CHEBI:43474"/>
        <dbReference type="ChEBI" id="CHEBI:456216"/>
    </reaction>
</comment>
<comment type="subunit">
    <text evidence="1">Homohexamer. Forms an RuvA(8)-RuvB(12)-Holliday junction (HJ) complex. HJ DNA is sandwiched between 2 RuvA tetramers; dsDNA enters through RuvA and exits via RuvB. An RuvB hexamer assembles on each DNA strand where it exits the tetramer. Each RuvB hexamer is contacted by two RuvA subunits (via domain III) on 2 adjacent RuvB subunits; this complex drives branch migration. In the full resolvosome a probable DNA-RuvA(4)-RuvB(12)-RuvC(2) complex forms which resolves the HJ.</text>
</comment>
<comment type="subcellular location">
    <subcellularLocation>
        <location evidence="1">Cytoplasm</location>
    </subcellularLocation>
</comment>
<comment type="domain">
    <text evidence="1">Has 3 domains, the large (RuvB-L) and small ATPase (RuvB-S) domains and the C-terminal head (RuvB-H) domain. The head domain binds DNA, while the ATPase domains jointly bind ATP, ADP or are empty depending on the state of the subunit in the translocation cycle. During a single DNA translocation step the structure of each domain remains the same, but their relative positions change.</text>
</comment>
<comment type="similarity">
    <text evidence="1">Belongs to the RuvB family.</text>
</comment>
<organism>
    <name type="scientific">Acinetobacter baumannii (strain SDF)</name>
    <dbReference type="NCBI Taxonomy" id="509170"/>
    <lineage>
        <taxon>Bacteria</taxon>
        <taxon>Pseudomonadati</taxon>
        <taxon>Pseudomonadota</taxon>
        <taxon>Gammaproteobacteria</taxon>
        <taxon>Moraxellales</taxon>
        <taxon>Moraxellaceae</taxon>
        <taxon>Acinetobacter</taxon>
        <taxon>Acinetobacter calcoaceticus/baumannii complex</taxon>
    </lineage>
</organism>
<protein>
    <recommendedName>
        <fullName evidence="1">Holliday junction branch migration complex subunit RuvB</fullName>
        <ecNumber evidence="1">3.6.4.-</ecNumber>
    </recommendedName>
</protein>
<reference key="1">
    <citation type="journal article" date="2008" name="PLoS ONE">
        <title>Comparative analysis of Acinetobacters: three genomes for three lifestyles.</title>
        <authorList>
            <person name="Vallenet D."/>
            <person name="Nordmann P."/>
            <person name="Barbe V."/>
            <person name="Poirel L."/>
            <person name="Mangenot S."/>
            <person name="Bataille E."/>
            <person name="Dossat C."/>
            <person name="Gas S."/>
            <person name="Kreimeyer A."/>
            <person name="Lenoble P."/>
            <person name="Oztas S."/>
            <person name="Poulain J."/>
            <person name="Segurens B."/>
            <person name="Robert C."/>
            <person name="Abergel C."/>
            <person name="Claverie J.-M."/>
            <person name="Raoult D."/>
            <person name="Medigue C."/>
            <person name="Weissenbach J."/>
            <person name="Cruveiller S."/>
        </authorList>
    </citation>
    <scope>NUCLEOTIDE SEQUENCE [LARGE SCALE GENOMIC DNA]</scope>
    <source>
        <strain>SDF</strain>
    </source>
</reference>